<organism>
    <name type="scientific">Mus musculus</name>
    <name type="common">Mouse</name>
    <dbReference type="NCBI Taxonomy" id="10090"/>
    <lineage>
        <taxon>Eukaryota</taxon>
        <taxon>Metazoa</taxon>
        <taxon>Chordata</taxon>
        <taxon>Craniata</taxon>
        <taxon>Vertebrata</taxon>
        <taxon>Euteleostomi</taxon>
        <taxon>Mammalia</taxon>
        <taxon>Eutheria</taxon>
        <taxon>Euarchontoglires</taxon>
        <taxon>Glires</taxon>
        <taxon>Rodentia</taxon>
        <taxon>Myomorpha</taxon>
        <taxon>Muroidea</taxon>
        <taxon>Muridae</taxon>
        <taxon>Murinae</taxon>
        <taxon>Mus</taxon>
        <taxon>Mus</taxon>
    </lineage>
</organism>
<evidence type="ECO:0000250" key="1"/>
<evidence type="ECO:0000255" key="2"/>
<evidence type="ECO:0000269" key="3">
    <source>
    </source>
</evidence>
<evidence type="ECO:0000269" key="4">
    <source>
    </source>
</evidence>
<evidence type="ECO:0000269" key="5">
    <source>
    </source>
</evidence>
<evidence type="ECO:0000305" key="6"/>
<reference key="1">
    <citation type="journal article" date="2002" name="J. Immunol.">
        <title>New IL-17 family members promote Th1 or Th2 responses in the lung: in vivo function of the novel cytokine IL-25.</title>
        <authorList>
            <person name="Hurst S.D."/>
            <person name="Muchamuel T."/>
            <person name="Gorman D.M."/>
            <person name="Gilbert J.M."/>
            <person name="Clifford T."/>
            <person name="Kwan S."/>
            <person name="Menon S."/>
            <person name="Seymour B."/>
            <person name="Jackson C."/>
            <person name="Kung T.T."/>
            <person name="Brieland J.K."/>
            <person name="Zurawski S.M."/>
            <person name="Chapman R.W."/>
            <person name="Zurawski G."/>
            <person name="Coffman R.L."/>
        </authorList>
    </citation>
    <scope>NUCLEOTIDE SEQUENCE [MRNA]</scope>
</reference>
<reference key="2">
    <citation type="journal article" date="2009" name="PLoS Biol.">
        <title>Lineage-specific biology revealed by a finished genome assembly of the mouse.</title>
        <authorList>
            <person name="Church D.M."/>
            <person name="Goodstadt L."/>
            <person name="Hillier L.W."/>
            <person name="Zody M.C."/>
            <person name="Goldstein S."/>
            <person name="She X."/>
            <person name="Bult C.J."/>
            <person name="Agarwala R."/>
            <person name="Cherry J.L."/>
            <person name="DiCuccio M."/>
            <person name="Hlavina W."/>
            <person name="Kapustin Y."/>
            <person name="Meric P."/>
            <person name="Maglott D."/>
            <person name="Birtle Z."/>
            <person name="Marques A.C."/>
            <person name="Graves T."/>
            <person name="Zhou S."/>
            <person name="Teague B."/>
            <person name="Potamousis K."/>
            <person name="Churas C."/>
            <person name="Place M."/>
            <person name="Herschleb J."/>
            <person name="Runnheim R."/>
            <person name="Forrest D."/>
            <person name="Amos-Landgraf J."/>
            <person name="Schwartz D.C."/>
            <person name="Cheng Z."/>
            <person name="Lindblad-Toh K."/>
            <person name="Eichler E.E."/>
            <person name="Ponting C.P."/>
        </authorList>
    </citation>
    <scope>NUCLEOTIDE SEQUENCE [LARGE SCALE GENOMIC DNA]</scope>
    <source>
        <strain>C57BL/6J</strain>
    </source>
</reference>
<reference key="3">
    <citation type="journal article" date="2004" name="Genome Res.">
        <title>The status, quality, and expansion of the NIH full-length cDNA project: the Mammalian Gene Collection (MGC).</title>
        <authorList>
            <consortium name="The MGC Project Team"/>
        </authorList>
    </citation>
    <scope>NUCLEOTIDE SEQUENCE [LARGE SCALE MRNA] OF 2-194</scope>
</reference>
<reference key="4">
    <citation type="journal article" date="2011" name="Immunity">
        <title>Interleukin-17C promotes Th17 cell responses and autoimmune disease via interleukin-17 receptor E.</title>
        <authorList>
            <person name="Chang S.H."/>
            <person name="Reynolds J.M."/>
            <person name="Pappu B.P."/>
            <person name="Chen G."/>
            <person name="Martinez G.J."/>
            <person name="Dong C."/>
        </authorList>
    </citation>
    <scope>FUNCTION</scope>
    <scope>INTERACTION WITH IL17RA AND IL17RE</scope>
    <scope>DISRUPTION PHENOTYPE</scope>
</reference>
<reference key="5">
    <citation type="journal article" date="2011" name="Nat. Immunol.">
        <title>IL-17RE is the functional receptor for IL-17C and mediates mucosal immunity to infection with intestinal pathogens.</title>
        <authorList>
            <person name="Song X."/>
            <person name="Zhu S."/>
            <person name="Shi P."/>
            <person name="Liu Y."/>
            <person name="Shi Y."/>
            <person name="Levin S.D."/>
            <person name="Qian Y."/>
        </authorList>
    </citation>
    <scope>FUNCTION</scope>
    <scope>INTERACTION WITH IL17RA AND IL17RE</scope>
    <scope>INDUCTION</scope>
</reference>
<reference key="6">
    <citation type="journal article" date="2011" name="Nat. Immunol.">
        <title>IL-17C regulates the innate immune function of epithelial cells in an autocrine manner.</title>
        <authorList>
            <person name="Ramirez-Carrozzi V."/>
            <person name="Sambandam A."/>
            <person name="Luis E."/>
            <person name="Lin Z."/>
            <person name="Jeet S."/>
            <person name="Lesch J."/>
            <person name="Hackney J."/>
            <person name="Kim J."/>
            <person name="Zhou M."/>
            <person name="Lai J."/>
            <person name="Modrusan Z."/>
            <person name="Sai T."/>
            <person name="Lee W."/>
            <person name="Xu M."/>
            <person name="Caplazi P."/>
            <person name="Diehl L."/>
            <person name="de Voss J."/>
            <person name="Balazs M."/>
            <person name="Gonzalez L. Jr."/>
            <person name="Singh H."/>
            <person name="Ouyang W."/>
            <person name="Pappu R."/>
        </authorList>
    </citation>
    <scope>FUNCTION</scope>
    <scope>TISSUE SPECIFICITY</scope>
</reference>
<protein>
    <recommendedName>
        <fullName>Interleukin-17C</fullName>
        <shortName>Il-17c</shortName>
    </recommendedName>
    <alternativeName>
        <fullName>Cytokine CX2</fullName>
    </alternativeName>
</protein>
<keyword id="KW-0202">Cytokine</keyword>
<keyword id="KW-1015">Disulfide bond</keyword>
<keyword id="KW-0395">Inflammatory response</keyword>
<keyword id="KW-1185">Reference proteome</keyword>
<keyword id="KW-0964">Secreted</keyword>
<keyword id="KW-0732">Signal</keyword>
<feature type="signal peptide" evidence="2">
    <location>
        <begin position="1"/>
        <end position="16"/>
    </location>
</feature>
<feature type="chain" id="PRO_0000421684" description="Interleukin-17C">
    <location>
        <begin position="17"/>
        <end position="194"/>
    </location>
</feature>
<feature type="disulfide bond" evidence="1">
    <location>
        <begin position="125"/>
        <end position="185"/>
    </location>
</feature>
<feature type="disulfide bond" evidence="1">
    <location>
        <begin position="130"/>
        <end position="187"/>
    </location>
</feature>
<dbReference type="EMBL" id="AF458061">
    <property type="protein sequence ID" value="AAM77565.1"/>
    <property type="molecule type" value="mRNA"/>
</dbReference>
<dbReference type="EMBL" id="AL591003">
    <property type="status" value="NOT_ANNOTATED_CDS"/>
    <property type="molecule type" value="Genomic_DNA"/>
</dbReference>
<dbReference type="EMBL" id="BC145853">
    <property type="protein sequence ID" value="AAI45854.1"/>
    <property type="status" value="ALT_INIT"/>
    <property type="molecule type" value="mRNA"/>
</dbReference>
<dbReference type="RefSeq" id="NP_665833.3">
    <property type="nucleotide sequence ID" value="NM_145834.3"/>
</dbReference>
<dbReference type="SMR" id="Q8K4C5"/>
<dbReference type="FunCoup" id="Q8K4C5">
    <property type="interactions" value="676"/>
</dbReference>
<dbReference type="IntAct" id="Q8K4C5">
    <property type="interactions" value="2"/>
</dbReference>
<dbReference type="STRING" id="10090.ENSMUSP00000056008"/>
<dbReference type="GlyGen" id="Q8K4C5">
    <property type="glycosylation" value="1 site"/>
</dbReference>
<dbReference type="PaxDb" id="10090-ENSMUSP00000056008"/>
<dbReference type="DNASU" id="234836"/>
<dbReference type="GeneID" id="234836"/>
<dbReference type="KEGG" id="mmu:234836"/>
<dbReference type="UCSC" id="uc012gmc.1">
    <property type="organism name" value="mouse"/>
</dbReference>
<dbReference type="AGR" id="MGI:2446486"/>
<dbReference type="CTD" id="27189"/>
<dbReference type="MGI" id="MGI:2446486">
    <property type="gene designation" value="Il17c"/>
</dbReference>
<dbReference type="eggNOG" id="ENOG502S2UJ">
    <property type="taxonomic scope" value="Eukaryota"/>
</dbReference>
<dbReference type="InParanoid" id="Q8K4C5"/>
<dbReference type="PhylomeDB" id="Q8K4C5"/>
<dbReference type="TreeFam" id="TF314701"/>
<dbReference type="BioGRID-ORCS" id="234836">
    <property type="hits" value="2 hits in 56 CRISPR screens"/>
</dbReference>
<dbReference type="PRO" id="PR:Q8K4C5"/>
<dbReference type="Proteomes" id="UP000000589">
    <property type="component" value="Unplaced"/>
</dbReference>
<dbReference type="RNAct" id="Q8K4C5">
    <property type="molecule type" value="protein"/>
</dbReference>
<dbReference type="GO" id="GO:0005615">
    <property type="term" value="C:extracellular space"/>
    <property type="evidence" value="ECO:0000314"/>
    <property type="project" value="MGI"/>
</dbReference>
<dbReference type="GO" id="GO:0005125">
    <property type="term" value="F:cytokine activity"/>
    <property type="evidence" value="ECO:0000314"/>
    <property type="project" value="MGI"/>
</dbReference>
<dbReference type="GO" id="GO:0006954">
    <property type="term" value="P:inflammatory response"/>
    <property type="evidence" value="ECO:0007669"/>
    <property type="project" value="UniProtKB-KW"/>
</dbReference>
<dbReference type="GO" id="GO:0030223">
    <property type="term" value="P:neutrophil differentiation"/>
    <property type="evidence" value="ECO:0000314"/>
    <property type="project" value="MGI"/>
</dbReference>
<dbReference type="GO" id="GO:1900017">
    <property type="term" value="P:positive regulation of cytokine production involved in inflammatory response"/>
    <property type="evidence" value="ECO:0000314"/>
    <property type="project" value="MGI"/>
</dbReference>
<dbReference type="FunFam" id="2.10.90.10:FF:000046">
    <property type="entry name" value="Interleukin 17C"/>
    <property type="match status" value="1"/>
</dbReference>
<dbReference type="Gene3D" id="2.10.90.10">
    <property type="entry name" value="Cystine-knot cytokines"/>
    <property type="match status" value="1"/>
</dbReference>
<dbReference type="InterPro" id="IPR029034">
    <property type="entry name" value="Cystine-knot_cytokine"/>
</dbReference>
<dbReference type="InterPro" id="IPR020440">
    <property type="entry name" value="IL-17_chr"/>
</dbReference>
<dbReference type="InterPro" id="IPR010345">
    <property type="entry name" value="IL-17_fam"/>
</dbReference>
<dbReference type="Pfam" id="PF06083">
    <property type="entry name" value="IL17"/>
    <property type="match status" value="1"/>
</dbReference>
<dbReference type="PRINTS" id="PR01932">
    <property type="entry name" value="INTRLEUKIN17"/>
</dbReference>
<dbReference type="SUPFAM" id="SSF57501">
    <property type="entry name" value="Cystine-knot cytokines"/>
    <property type="match status" value="1"/>
</dbReference>
<accession>Q8K4C5</accession>
<accession>A6H6F0</accession>
<name>IL17C_MOUSE</name>
<gene>
    <name type="primary">Il17c</name>
</gene>
<sequence length="194" mass="21592">MSLLLLGWLPTGMTHQDPPSWGKPRSHRTLRCYSAEELSHGQAPPHLLTRSARWEQALPVALVASLEATGHRRQHEGPLAGTQCPVLRPEEVLEADTHERSISPWRYRIDTDENRYPQKLAVAECLCRGCINAKTGRETAALNSVQLLQSLLVLRRQPCSRDGTADPTPGSFAFHTEFIRVPVGCTCVLPRSTQ</sequence>
<comment type="function">
    <text evidence="3 4 5">Cytokine that plays a crucial role in innate immunity of the epithelium, including to intestinal bacterial pathogens, in an autocrine manner. Stimulates the production of antibacterial peptides and pro-inflammatory molecules for host defense by signaling through the NFKB and MAPK pathways. Acts synergically with IL22, TNF and IL1B in inducing antibacterial peptides. May have protective function by maintaining epithelial homeostasis after an inflammatory challenge, such as that caused in the intestine by dextran sulfate sodium in a colitis model. May also promote an inflammatory phenotype, such as skin in a psoriasis model. Enhanced IL17C/IL17RE signaling may also lead to greater susceptibility to autoimmune diseases, such as autoimmune encephalitis.</text>
</comment>
<comment type="subunit">
    <text>Binds to a heterodimer formed by IL17RA and IL17RE.</text>
</comment>
<comment type="subcellular location">
    <subcellularLocation>
        <location evidence="6">Secreted</location>
    </subcellularLocation>
</comment>
<comment type="tissue specificity">
    <text evidence="4">Expressed by epithelial cells after bacterial challenge. Low expression, if any, in lymphocytes.</text>
</comment>
<comment type="induction">
    <text evidence="5">Up-regulated in the colon, but not in spleen or liver, during infection with Citrobacter rodentium. Up-regulated by various inflammatory cytokines, including TNF, IL1B, IL17A and IL17F in colon epithelial cells.</text>
</comment>
<comment type="disruption phenotype">
    <text evidence="3">Mutant animals develop normally and do not exhibit any pronounced immunological deficiency.</text>
</comment>
<comment type="similarity">
    <text evidence="6">Belongs to the IL-17 family.</text>
</comment>
<comment type="sequence caution" evidence="6">
    <conflict type="erroneous initiation">
        <sequence resource="EMBL-CDS" id="AAI45854"/>
    </conflict>
    <text>Truncated N-terminus.</text>
</comment>
<proteinExistence type="evidence at protein level"/>